<accession>O32067</accession>
<evidence type="ECO:0000255" key="1">
    <source>
        <dbReference type="PROSITE-ProRule" id="PRU00349"/>
    </source>
</evidence>
<evidence type="ECO:0000269" key="2">
    <source>
    </source>
</evidence>
<reference key="1">
    <citation type="journal article" date="1997" name="Nature">
        <title>The complete genome sequence of the Gram-positive bacterium Bacillus subtilis.</title>
        <authorList>
            <person name="Kunst F."/>
            <person name="Ogasawara N."/>
            <person name="Moszer I."/>
            <person name="Albertini A.M."/>
            <person name="Alloni G."/>
            <person name="Azevedo V."/>
            <person name="Bertero M.G."/>
            <person name="Bessieres P."/>
            <person name="Bolotin A."/>
            <person name="Borchert S."/>
            <person name="Borriss R."/>
            <person name="Boursier L."/>
            <person name="Brans A."/>
            <person name="Braun M."/>
            <person name="Brignell S.C."/>
            <person name="Bron S."/>
            <person name="Brouillet S."/>
            <person name="Bruschi C.V."/>
            <person name="Caldwell B."/>
            <person name="Capuano V."/>
            <person name="Carter N.M."/>
            <person name="Choi S.-K."/>
            <person name="Codani J.-J."/>
            <person name="Connerton I.F."/>
            <person name="Cummings N.J."/>
            <person name="Daniel R.A."/>
            <person name="Denizot F."/>
            <person name="Devine K.M."/>
            <person name="Duesterhoeft A."/>
            <person name="Ehrlich S.D."/>
            <person name="Emmerson P.T."/>
            <person name="Entian K.-D."/>
            <person name="Errington J."/>
            <person name="Fabret C."/>
            <person name="Ferrari E."/>
            <person name="Foulger D."/>
            <person name="Fritz C."/>
            <person name="Fujita M."/>
            <person name="Fujita Y."/>
            <person name="Fuma S."/>
            <person name="Galizzi A."/>
            <person name="Galleron N."/>
            <person name="Ghim S.-Y."/>
            <person name="Glaser P."/>
            <person name="Goffeau A."/>
            <person name="Golightly E.J."/>
            <person name="Grandi G."/>
            <person name="Guiseppi G."/>
            <person name="Guy B.J."/>
            <person name="Haga K."/>
            <person name="Haiech J."/>
            <person name="Harwood C.R."/>
            <person name="Henaut A."/>
            <person name="Hilbert H."/>
            <person name="Holsappel S."/>
            <person name="Hosono S."/>
            <person name="Hullo M.-F."/>
            <person name="Itaya M."/>
            <person name="Jones L.-M."/>
            <person name="Joris B."/>
            <person name="Karamata D."/>
            <person name="Kasahara Y."/>
            <person name="Klaerr-Blanchard M."/>
            <person name="Klein C."/>
            <person name="Kobayashi Y."/>
            <person name="Koetter P."/>
            <person name="Koningstein G."/>
            <person name="Krogh S."/>
            <person name="Kumano M."/>
            <person name="Kurita K."/>
            <person name="Lapidus A."/>
            <person name="Lardinois S."/>
            <person name="Lauber J."/>
            <person name="Lazarevic V."/>
            <person name="Lee S.-M."/>
            <person name="Levine A."/>
            <person name="Liu H."/>
            <person name="Masuda S."/>
            <person name="Mauel C."/>
            <person name="Medigue C."/>
            <person name="Medina N."/>
            <person name="Mellado R.P."/>
            <person name="Mizuno M."/>
            <person name="Moestl D."/>
            <person name="Nakai S."/>
            <person name="Noback M."/>
            <person name="Noone D."/>
            <person name="O'Reilly M."/>
            <person name="Ogawa K."/>
            <person name="Ogiwara A."/>
            <person name="Oudega B."/>
            <person name="Park S.-H."/>
            <person name="Parro V."/>
            <person name="Pohl T.M."/>
            <person name="Portetelle D."/>
            <person name="Porwollik S."/>
            <person name="Prescott A.M."/>
            <person name="Presecan E."/>
            <person name="Pujic P."/>
            <person name="Purnelle B."/>
            <person name="Rapoport G."/>
            <person name="Rey M."/>
            <person name="Reynolds S."/>
            <person name="Rieger M."/>
            <person name="Rivolta C."/>
            <person name="Rocha E."/>
            <person name="Roche B."/>
            <person name="Rose M."/>
            <person name="Sadaie Y."/>
            <person name="Sato T."/>
            <person name="Scanlan E."/>
            <person name="Schleich S."/>
            <person name="Schroeter R."/>
            <person name="Scoffone F."/>
            <person name="Sekiguchi J."/>
            <person name="Sekowska A."/>
            <person name="Seror S.J."/>
            <person name="Serror P."/>
            <person name="Shin B.-S."/>
            <person name="Soldo B."/>
            <person name="Sorokin A."/>
            <person name="Tacconi E."/>
            <person name="Takagi T."/>
            <person name="Takahashi H."/>
            <person name="Takemaru K."/>
            <person name="Takeuchi M."/>
            <person name="Tamakoshi A."/>
            <person name="Tanaka T."/>
            <person name="Terpstra P."/>
            <person name="Tognoni A."/>
            <person name="Tosato V."/>
            <person name="Uchiyama S."/>
            <person name="Vandenbol M."/>
            <person name="Vannier F."/>
            <person name="Vassarotti A."/>
            <person name="Viari A."/>
            <person name="Wambutt R."/>
            <person name="Wedler E."/>
            <person name="Wedler H."/>
            <person name="Weitzenegger T."/>
            <person name="Winters P."/>
            <person name="Wipat A."/>
            <person name="Yamamoto H."/>
            <person name="Yamane K."/>
            <person name="Yasumoto K."/>
            <person name="Yata K."/>
            <person name="Yoshida K."/>
            <person name="Yoshikawa H.-F."/>
            <person name="Zumstein E."/>
            <person name="Yoshikawa H."/>
            <person name="Danchin A."/>
        </authorList>
    </citation>
    <scope>NUCLEOTIDE SEQUENCE [LARGE SCALE GENOMIC DNA]</scope>
    <source>
        <strain>168</strain>
    </source>
</reference>
<reference key="2">
    <citation type="journal article" date="2003" name="J. Bacteriol.">
        <title>Global characterization of disulfide stress in Bacillus subtilis.</title>
        <authorList>
            <person name="Leichert L.I.O."/>
            <person name="Scharf C."/>
            <person name="Hecker M."/>
        </authorList>
    </citation>
    <scope>INDUCTION BY DISULFIDE STRESS</scope>
</reference>
<gene>
    <name type="primary">ytzE</name>
    <name type="ordered locus">BSU30020</name>
</gene>
<sequence>MKPSTNRMLTRIKSVYMFIQEKGLVTTQELVDEFGITPRTIQRDLNVLAYNDLVHSPSRGKWETTRKKVKITS</sequence>
<organism>
    <name type="scientific">Bacillus subtilis (strain 168)</name>
    <dbReference type="NCBI Taxonomy" id="224308"/>
    <lineage>
        <taxon>Bacteria</taxon>
        <taxon>Bacillati</taxon>
        <taxon>Bacillota</taxon>
        <taxon>Bacilli</taxon>
        <taxon>Bacillales</taxon>
        <taxon>Bacillaceae</taxon>
        <taxon>Bacillus</taxon>
    </lineage>
</organism>
<name>YTZE_BACSU</name>
<dbReference type="EMBL" id="AL009126">
    <property type="protein sequence ID" value="CAB14980.1"/>
    <property type="molecule type" value="Genomic_DNA"/>
</dbReference>
<dbReference type="PIR" id="G70004">
    <property type="entry name" value="G70004"/>
</dbReference>
<dbReference type="RefSeq" id="NP_390880.1">
    <property type="nucleotide sequence ID" value="NC_000964.3"/>
</dbReference>
<dbReference type="RefSeq" id="WP_003152337.1">
    <property type="nucleotide sequence ID" value="NZ_OZ025638.1"/>
</dbReference>
<dbReference type="SMR" id="O32067"/>
<dbReference type="FunCoup" id="O32067">
    <property type="interactions" value="47"/>
</dbReference>
<dbReference type="STRING" id="224308.BSU30020"/>
<dbReference type="PaxDb" id="224308-BSU30020"/>
<dbReference type="EnsemblBacteria" id="CAB14980">
    <property type="protein sequence ID" value="CAB14980"/>
    <property type="gene ID" value="BSU_30020"/>
</dbReference>
<dbReference type="GeneID" id="937281"/>
<dbReference type="KEGG" id="bsu:BSU30020"/>
<dbReference type="PATRIC" id="fig|224308.179.peg.3260"/>
<dbReference type="eggNOG" id="COG1349">
    <property type="taxonomic scope" value="Bacteria"/>
</dbReference>
<dbReference type="InParanoid" id="O32067"/>
<dbReference type="OrthoDB" id="2353732at2"/>
<dbReference type="BioCyc" id="BSUB:BSU30020-MONOMER"/>
<dbReference type="PRO" id="PR:O32067"/>
<dbReference type="Proteomes" id="UP000001570">
    <property type="component" value="Chromosome"/>
</dbReference>
<dbReference type="GO" id="GO:0003677">
    <property type="term" value="F:DNA binding"/>
    <property type="evidence" value="ECO:0007669"/>
    <property type="project" value="UniProtKB-KW"/>
</dbReference>
<dbReference type="GO" id="GO:0003700">
    <property type="term" value="F:DNA-binding transcription factor activity"/>
    <property type="evidence" value="ECO:0007669"/>
    <property type="project" value="InterPro"/>
</dbReference>
<dbReference type="Gene3D" id="1.10.10.10">
    <property type="entry name" value="Winged helix-like DNA-binding domain superfamily/Winged helix DNA-binding domain"/>
    <property type="match status" value="1"/>
</dbReference>
<dbReference type="InterPro" id="IPR001034">
    <property type="entry name" value="DeoR_HTH"/>
</dbReference>
<dbReference type="InterPro" id="IPR036388">
    <property type="entry name" value="WH-like_DNA-bd_sf"/>
</dbReference>
<dbReference type="InterPro" id="IPR036390">
    <property type="entry name" value="WH_DNA-bd_sf"/>
</dbReference>
<dbReference type="Pfam" id="PF08220">
    <property type="entry name" value="HTH_DeoR"/>
    <property type="match status" value="1"/>
</dbReference>
<dbReference type="SMART" id="SM00420">
    <property type="entry name" value="HTH_DEOR"/>
    <property type="match status" value="1"/>
</dbReference>
<dbReference type="SUPFAM" id="SSF46785">
    <property type="entry name" value="Winged helix' DNA-binding domain"/>
    <property type="match status" value="1"/>
</dbReference>
<dbReference type="PROSITE" id="PS51000">
    <property type="entry name" value="HTH_DEOR_2"/>
    <property type="match status" value="1"/>
</dbReference>
<keyword id="KW-0238">DNA-binding</keyword>
<keyword id="KW-1185">Reference proteome</keyword>
<keyword id="KW-0678">Repressor</keyword>
<keyword id="KW-0804">Transcription</keyword>
<keyword id="KW-0805">Transcription regulation</keyword>
<comment type="induction">
    <text evidence="2">By disulfide stress.</text>
</comment>
<feature type="chain" id="PRO_0000360706" description="Uncharacterized HTH-type transcriptional regulator YtzE">
    <location>
        <begin position="1"/>
        <end position="73"/>
    </location>
</feature>
<feature type="domain" description="HTH deoR-type" evidence="1">
    <location>
        <begin position="8"/>
        <end position="63"/>
    </location>
</feature>
<feature type="DNA-binding region" description="H-T-H motif" evidence="1">
    <location>
        <begin position="25"/>
        <end position="44"/>
    </location>
</feature>
<protein>
    <recommendedName>
        <fullName>Uncharacterized HTH-type transcriptional regulator YtzE</fullName>
    </recommendedName>
</protein>
<proteinExistence type="evidence at protein level"/>